<proteinExistence type="inferred from homology"/>
<organism>
    <name type="scientific">Pyricularia oryzae (strain 70-15 / ATCC MYA-4617 / FGSC 8958)</name>
    <name type="common">Rice blast fungus</name>
    <name type="synonym">Magnaporthe oryzae</name>
    <dbReference type="NCBI Taxonomy" id="242507"/>
    <lineage>
        <taxon>Eukaryota</taxon>
        <taxon>Fungi</taxon>
        <taxon>Dikarya</taxon>
        <taxon>Ascomycota</taxon>
        <taxon>Pezizomycotina</taxon>
        <taxon>Sordariomycetes</taxon>
        <taxon>Sordariomycetidae</taxon>
        <taxon>Magnaporthales</taxon>
        <taxon>Pyriculariaceae</taxon>
        <taxon>Pyricularia</taxon>
    </lineage>
</organism>
<dbReference type="EMBL" id="CM001233">
    <property type="protein sequence ID" value="EHA51540.1"/>
    <property type="molecule type" value="Genomic_DNA"/>
</dbReference>
<dbReference type="RefSeq" id="XP_003711347.1">
    <property type="nucleotide sequence ID" value="XM_003711299.1"/>
</dbReference>
<dbReference type="SMR" id="A4R9U5"/>
<dbReference type="FunCoup" id="A4R9U5">
    <property type="interactions" value="252"/>
</dbReference>
<dbReference type="STRING" id="242507.A4R9U5"/>
<dbReference type="EnsemblFungi" id="MGG_07449T0">
    <property type="protein sequence ID" value="MGG_07449T0"/>
    <property type="gene ID" value="MGG_07449"/>
</dbReference>
<dbReference type="GeneID" id="2683369"/>
<dbReference type="KEGG" id="mgr:MGG_07449"/>
<dbReference type="VEuPathDB" id="FungiDB:MGG_07449"/>
<dbReference type="eggNOG" id="KOG4771">
    <property type="taxonomic scope" value="Eukaryota"/>
</dbReference>
<dbReference type="HOGENOM" id="CLU_078857_0_0_1"/>
<dbReference type="InParanoid" id="A4R9U5"/>
<dbReference type="OMA" id="MQQTEAD"/>
<dbReference type="OrthoDB" id="285729at2759"/>
<dbReference type="Proteomes" id="UP000009058">
    <property type="component" value="Chromosome 3"/>
</dbReference>
<dbReference type="GO" id="GO:0005730">
    <property type="term" value="C:nucleolus"/>
    <property type="evidence" value="ECO:0007669"/>
    <property type="project" value="UniProtKB-SubCell"/>
</dbReference>
<dbReference type="GO" id="GO:0030687">
    <property type="term" value="C:preribosome, large subunit precursor"/>
    <property type="evidence" value="ECO:0007669"/>
    <property type="project" value="EnsemblFungi"/>
</dbReference>
<dbReference type="GO" id="GO:0042273">
    <property type="term" value="P:ribosomal large subunit biogenesis"/>
    <property type="evidence" value="ECO:0007669"/>
    <property type="project" value="EnsemblFungi"/>
</dbReference>
<dbReference type="GO" id="GO:0006364">
    <property type="term" value="P:rRNA processing"/>
    <property type="evidence" value="ECO:0007669"/>
    <property type="project" value="UniProtKB-KW"/>
</dbReference>
<dbReference type="InterPro" id="IPR019002">
    <property type="entry name" value="Ribosome_biogenesis_Nop16"/>
</dbReference>
<dbReference type="PANTHER" id="PTHR13243">
    <property type="entry name" value="HSPC111 PROTEIN-RELATED"/>
    <property type="match status" value="1"/>
</dbReference>
<dbReference type="PANTHER" id="PTHR13243:SF1">
    <property type="entry name" value="NUCLEOLAR PROTEIN 16"/>
    <property type="match status" value="1"/>
</dbReference>
<dbReference type="Pfam" id="PF09420">
    <property type="entry name" value="Nop16"/>
    <property type="match status" value="1"/>
</dbReference>
<evidence type="ECO:0000250" key="1"/>
<evidence type="ECO:0000256" key="2">
    <source>
        <dbReference type="SAM" id="MobiDB-lite"/>
    </source>
</evidence>
<evidence type="ECO:0000305" key="3"/>
<comment type="function">
    <text evidence="1">Involved in the biogenesis of the 60S ribosomal subunit.</text>
</comment>
<comment type="subunit">
    <text evidence="1">Component of the pre-66S ribosomal particle.</text>
</comment>
<comment type="subcellular location">
    <subcellularLocation>
        <location evidence="1">Nucleus</location>
        <location evidence="1">Nucleolus</location>
    </subcellularLocation>
</comment>
<comment type="similarity">
    <text evidence="3">Belongs to the NOP16 family.</text>
</comment>
<reference key="1">
    <citation type="journal article" date="2005" name="Nature">
        <title>The genome sequence of the rice blast fungus Magnaporthe grisea.</title>
        <authorList>
            <person name="Dean R.A."/>
            <person name="Talbot N.J."/>
            <person name="Ebbole D.J."/>
            <person name="Farman M.L."/>
            <person name="Mitchell T.K."/>
            <person name="Orbach M.J."/>
            <person name="Thon M.R."/>
            <person name="Kulkarni R."/>
            <person name="Xu J.-R."/>
            <person name="Pan H."/>
            <person name="Read N.D."/>
            <person name="Lee Y.-H."/>
            <person name="Carbone I."/>
            <person name="Brown D."/>
            <person name="Oh Y.Y."/>
            <person name="Donofrio N."/>
            <person name="Jeong J.S."/>
            <person name="Soanes D.M."/>
            <person name="Djonovic S."/>
            <person name="Kolomiets E."/>
            <person name="Rehmeyer C."/>
            <person name="Li W."/>
            <person name="Harding M."/>
            <person name="Kim S."/>
            <person name="Lebrun M.-H."/>
            <person name="Bohnert H."/>
            <person name="Coughlan S."/>
            <person name="Butler J."/>
            <person name="Calvo S.E."/>
            <person name="Ma L.-J."/>
            <person name="Nicol R."/>
            <person name="Purcell S."/>
            <person name="Nusbaum C."/>
            <person name="Galagan J.E."/>
            <person name="Birren B.W."/>
        </authorList>
    </citation>
    <scope>NUCLEOTIDE SEQUENCE [LARGE SCALE GENOMIC DNA]</scope>
    <source>
        <strain>70-15 / ATCC MYA-4617 / FGSC 8958</strain>
    </source>
</reference>
<protein>
    <recommendedName>
        <fullName>Nucleolar protein 16</fullName>
    </recommendedName>
</protein>
<sequence length="220" mass="24642">MGRTVRQKRKNRSSRPKVKQTNRPKKALNPLGNDLIAKNWNKKETLTQNYRRLGLLTRLQAPTGGVEPGLRGAADDKSNAHAPLGLSERKSTASSAVREVRVKRDAEGRIVSVINEEASAAANPLDDPLNELETDSDWEGFGSDDEAPTGDRVVDQLERMARVPRVKTVRGLSEREVEWLESLVAKHGDNVKAMERDHRLNPMQQTAADISRRLRRLRGE</sequence>
<name>NOP16_PYRO7</name>
<feature type="chain" id="PRO_0000320379" description="Nucleolar protein 16">
    <location>
        <begin position="1"/>
        <end position="220"/>
    </location>
</feature>
<feature type="region of interest" description="Disordered" evidence="2">
    <location>
        <begin position="1"/>
        <end position="33"/>
    </location>
</feature>
<feature type="region of interest" description="Disordered" evidence="2">
    <location>
        <begin position="62"/>
        <end position="82"/>
    </location>
</feature>
<feature type="region of interest" description="Disordered" evidence="2">
    <location>
        <begin position="199"/>
        <end position="220"/>
    </location>
</feature>
<feature type="compositionally biased region" description="Basic residues" evidence="2">
    <location>
        <begin position="1"/>
        <end position="26"/>
    </location>
</feature>
<keyword id="KW-0539">Nucleus</keyword>
<keyword id="KW-1185">Reference proteome</keyword>
<keyword id="KW-0687">Ribonucleoprotein</keyword>
<keyword id="KW-0690">Ribosome biogenesis</keyword>
<keyword id="KW-0698">rRNA processing</keyword>
<accession>A4R9U5</accession>
<accession>G4N161</accession>
<gene>
    <name type="primary">NOP16</name>
    <name type="ORF">MGG_07449</name>
</gene>